<proteinExistence type="inferred from homology"/>
<feature type="chain" id="PRO_0000380495" description="DNA ligase">
    <location>
        <begin position="1"/>
        <end position="662"/>
    </location>
</feature>
<feature type="domain" description="BRCT" evidence="1">
    <location>
        <begin position="581"/>
        <end position="662"/>
    </location>
</feature>
<feature type="active site" description="N6-AMP-lysine intermediate" evidence="1">
    <location>
        <position position="111"/>
    </location>
</feature>
<feature type="binding site" evidence="1">
    <location>
        <begin position="31"/>
        <end position="35"/>
    </location>
    <ligand>
        <name>NAD(+)</name>
        <dbReference type="ChEBI" id="CHEBI:57540"/>
    </ligand>
</feature>
<feature type="binding site" evidence="1">
    <location>
        <begin position="80"/>
        <end position="81"/>
    </location>
    <ligand>
        <name>NAD(+)</name>
        <dbReference type="ChEBI" id="CHEBI:57540"/>
    </ligand>
</feature>
<feature type="binding site" evidence="1">
    <location>
        <position position="109"/>
    </location>
    <ligand>
        <name>NAD(+)</name>
        <dbReference type="ChEBI" id="CHEBI:57540"/>
    </ligand>
</feature>
<feature type="binding site" evidence="1">
    <location>
        <position position="132"/>
    </location>
    <ligand>
        <name>NAD(+)</name>
        <dbReference type="ChEBI" id="CHEBI:57540"/>
    </ligand>
</feature>
<feature type="binding site" evidence="1">
    <location>
        <position position="166"/>
    </location>
    <ligand>
        <name>NAD(+)</name>
        <dbReference type="ChEBI" id="CHEBI:57540"/>
    </ligand>
</feature>
<feature type="binding site" evidence="1">
    <location>
        <position position="282"/>
    </location>
    <ligand>
        <name>NAD(+)</name>
        <dbReference type="ChEBI" id="CHEBI:57540"/>
    </ligand>
</feature>
<feature type="binding site" evidence="1">
    <location>
        <position position="306"/>
    </location>
    <ligand>
        <name>NAD(+)</name>
        <dbReference type="ChEBI" id="CHEBI:57540"/>
    </ligand>
</feature>
<feature type="binding site" evidence="1">
    <location>
        <position position="400"/>
    </location>
    <ligand>
        <name>Zn(2+)</name>
        <dbReference type="ChEBI" id="CHEBI:29105"/>
    </ligand>
</feature>
<feature type="binding site" evidence="1">
    <location>
        <position position="403"/>
    </location>
    <ligand>
        <name>Zn(2+)</name>
        <dbReference type="ChEBI" id="CHEBI:29105"/>
    </ligand>
</feature>
<feature type="binding site" evidence="1">
    <location>
        <position position="418"/>
    </location>
    <ligand>
        <name>Zn(2+)</name>
        <dbReference type="ChEBI" id="CHEBI:29105"/>
    </ligand>
</feature>
<feature type="binding site" evidence="1">
    <location>
        <position position="423"/>
    </location>
    <ligand>
        <name>Zn(2+)</name>
        <dbReference type="ChEBI" id="CHEBI:29105"/>
    </ligand>
</feature>
<gene>
    <name evidence="1" type="primary">ligA</name>
    <name type="ordered locus">Teth514_0538</name>
</gene>
<reference key="1">
    <citation type="submission" date="2008-01" db="EMBL/GenBank/DDBJ databases">
        <title>Complete sequence of Thermoanaerobacter sp. X514.</title>
        <authorList>
            <consortium name="US DOE Joint Genome Institute"/>
            <person name="Copeland A."/>
            <person name="Lucas S."/>
            <person name="Lapidus A."/>
            <person name="Barry K."/>
            <person name="Glavina del Rio T."/>
            <person name="Dalin E."/>
            <person name="Tice H."/>
            <person name="Pitluck S."/>
            <person name="Bruce D."/>
            <person name="Goodwin L."/>
            <person name="Saunders E."/>
            <person name="Brettin T."/>
            <person name="Detter J.C."/>
            <person name="Han C."/>
            <person name="Schmutz J."/>
            <person name="Larimer F."/>
            <person name="Land M."/>
            <person name="Hauser L."/>
            <person name="Kyrpides N."/>
            <person name="Kim E."/>
            <person name="Hemme C."/>
            <person name="Fields M.W."/>
            <person name="He Z."/>
            <person name="Zhou J."/>
            <person name="Richardson P."/>
        </authorList>
    </citation>
    <scope>NUCLEOTIDE SEQUENCE [LARGE SCALE GENOMIC DNA]</scope>
    <source>
        <strain>X514</strain>
    </source>
</reference>
<comment type="function">
    <text evidence="1">DNA ligase that catalyzes the formation of phosphodiester linkages between 5'-phosphoryl and 3'-hydroxyl groups in double-stranded DNA using NAD as a coenzyme and as the energy source for the reaction. It is essential for DNA replication and repair of damaged DNA.</text>
</comment>
<comment type="catalytic activity">
    <reaction evidence="1">
        <text>NAD(+) + (deoxyribonucleotide)n-3'-hydroxyl + 5'-phospho-(deoxyribonucleotide)m = (deoxyribonucleotide)n+m + AMP + beta-nicotinamide D-nucleotide.</text>
        <dbReference type="EC" id="6.5.1.2"/>
    </reaction>
</comment>
<comment type="cofactor">
    <cofactor evidence="1">
        <name>Mg(2+)</name>
        <dbReference type="ChEBI" id="CHEBI:18420"/>
    </cofactor>
    <cofactor evidence="1">
        <name>Mn(2+)</name>
        <dbReference type="ChEBI" id="CHEBI:29035"/>
    </cofactor>
</comment>
<comment type="similarity">
    <text evidence="1">Belongs to the NAD-dependent DNA ligase family. LigA subfamily.</text>
</comment>
<dbReference type="EC" id="6.5.1.2" evidence="1"/>
<dbReference type="EMBL" id="CP000923">
    <property type="protein sequence ID" value="ABY91846.1"/>
    <property type="molecule type" value="Genomic_DNA"/>
</dbReference>
<dbReference type="RefSeq" id="WP_003868771.1">
    <property type="nucleotide sequence ID" value="NC_010320.1"/>
</dbReference>
<dbReference type="SMR" id="B0K3S1"/>
<dbReference type="KEGG" id="tex:Teth514_0538"/>
<dbReference type="HOGENOM" id="CLU_007764_2_1_9"/>
<dbReference type="Proteomes" id="UP000002155">
    <property type="component" value="Chromosome"/>
</dbReference>
<dbReference type="GO" id="GO:0005829">
    <property type="term" value="C:cytosol"/>
    <property type="evidence" value="ECO:0007669"/>
    <property type="project" value="TreeGrafter"/>
</dbReference>
<dbReference type="GO" id="GO:0003677">
    <property type="term" value="F:DNA binding"/>
    <property type="evidence" value="ECO:0007669"/>
    <property type="project" value="InterPro"/>
</dbReference>
<dbReference type="GO" id="GO:0003911">
    <property type="term" value="F:DNA ligase (NAD+) activity"/>
    <property type="evidence" value="ECO:0007669"/>
    <property type="project" value="UniProtKB-UniRule"/>
</dbReference>
<dbReference type="GO" id="GO:0046872">
    <property type="term" value="F:metal ion binding"/>
    <property type="evidence" value="ECO:0007669"/>
    <property type="project" value="UniProtKB-KW"/>
</dbReference>
<dbReference type="GO" id="GO:0006281">
    <property type="term" value="P:DNA repair"/>
    <property type="evidence" value="ECO:0007669"/>
    <property type="project" value="UniProtKB-KW"/>
</dbReference>
<dbReference type="GO" id="GO:0006260">
    <property type="term" value="P:DNA replication"/>
    <property type="evidence" value="ECO:0007669"/>
    <property type="project" value="UniProtKB-KW"/>
</dbReference>
<dbReference type="CDD" id="cd17748">
    <property type="entry name" value="BRCT_DNA_ligase_like"/>
    <property type="match status" value="1"/>
</dbReference>
<dbReference type="CDD" id="cd00114">
    <property type="entry name" value="LIGANc"/>
    <property type="match status" value="1"/>
</dbReference>
<dbReference type="FunFam" id="1.10.150.20:FF:000006">
    <property type="entry name" value="DNA ligase"/>
    <property type="match status" value="1"/>
</dbReference>
<dbReference type="FunFam" id="1.10.150.20:FF:000007">
    <property type="entry name" value="DNA ligase"/>
    <property type="match status" value="1"/>
</dbReference>
<dbReference type="FunFam" id="1.10.287.610:FF:000002">
    <property type="entry name" value="DNA ligase"/>
    <property type="match status" value="1"/>
</dbReference>
<dbReference type="FunFam" id="2.40.50.140:FF:000012">
    <property type="entry name" value="DNA ligase"/>
    <property type="match status" value="1"/>
</dbReference>
<dbReference type="FunFam" id="3.30.470.30:FF:000001">
    <property type="entry name" value="DNA ligase"/>
    <property type="match status" value="1"/>
</dbReference>
<dbReference type="Gene3D" id="6.20.10.30">
    <property type="match status" value="1"/>
</dbReference>
<dbReference type="Gene3D" id="1.10.150.20">
    <property type="entry name" value="5' to 3' exonuclease, C-terminal subdomain"/>
    <property type="match status" value="2"/>
</dbReference>
<dbReference type="Gene3D" id="3.40.50.10190">
    <property type="entry name" value="BRCT domain"/>
    <property type="match status" value="1"/>
</dbReference>
<dbReference type="Gene3D" id="3.30.470.30">
    <property type="entry name" value="DNA ligase/mRNA capping enzyme"/>
    <property type="match status" value="1"/>
</dbReference>
<dbReference type="Gene3D" id="1.10.287.610">
    <property type="entry name" value="Helix hairpin bin"/>
    <property type="match status" value="1"/>
</dbReference>
<dbReference type="Gene3D" id="2.40.50.140">
    <property type="entry name" value="Nucleic acid-binding proteins"/>
    <property type="match status" value="1"/>
</dbReference>
<dbReference type="HAMAP" id="MF_01588">
    <property type="entry name" value="DNA_ligase_A"/>
    <property type="match status" value="1"/>
</dbReference>
<dbReference type="InterPro" id="IPR001357">
    <property type="entry name" value="BRCT_dom"/>
</dbReference>
<dbReference type="InterPro" id="IPR036420">
    <property type="entry name" value="BRCT_dom_sf"/>
</dbReference>
<dbReference type="InterPro" id="IPR041663">
    <property type="entry name" value="DisA/LigA_HHH"/>
</dbReference>
<dbReference type="InterPro" id="IPR001679">
    <property type="entry name" value="DNA_ligase"/>
</dbReference>
<dbReference type="InterPro" id="IPR018239">
    <property type="entry name" value="DNA_ligase_AS"/>
</dbReference>
<dbReference type="InterPro" id="IPR033136">
    <property type="entry name" value="DNA_ligase_CS"/>
</dbReference>
<dbReference type="InterPro" id="IPR013839">
    <property type="entry name" value="DNAligase_adenylation"/>
</dbReference>
<dbReference type="InterPro" id="IPR013840">
    <property type="entry name" value="DNAligase_N"/>
</dbReference>
<dbReference type="InterPro" id="IPR003583">
    <property type="entry name" value="Hlx-hairpin-Hlx_DNA-bd_motif"/>
</dbReference>
<dbReference type="InterPro" id="IPR012340">
    <property type="entry name" value="NA-bd_OB-fold"/>
</dbReference>
<dbReference type="InterPro" id="IPR004150">
    <property type="entry name" value="NAD_DNA_ligase_OB"/>
</dbReference>
<dbReference type="InterPro" id="IPR010994">
    <property type="entry name" value="RuvA_2-like"/>
</dbReference>
<dbReference type="InterPro" id="IPR004149">
    <property type="entry name" value="Znf_DNAligase_C4"/>
</dbReference>
<dbReference type="NCBIfam" id="TIGR00575">
    <property type="entry name" value="dnlj"/>
    <property type="match status" value="1"/>
</dbReference>
<dbReference type="NCBIfam" id="NF005932">
    <property type="entry name" value="PRK07956.1"/>
    <property type="match status" value="1"/>
</dbReference>
<dbReference type="PANTHER" id="PTHR23389">
    <property type="entry name" value="CHROMOSOME TRANSMISSION FIDELITY FACTOR 18"/>
    <property type="match status" value="1"/>
</dbReference>
<dbReference type="PANTHER" id="PTHR23389:SF9">
    <property type="entry name" value="DNA LIGASE"/>
    <property type="match status" value="1"/>
</dbReference>
<dbReference type="Pfam" id="PF00533">
    <property type="entry name" value="BRCT"/>
    <property type="match status" value="1"/>
</dbReference>
<dbReference type="Pfam" id="PF01653">
    <property type="entry name" value="DNA_ligase_aden"/>
    <property type="match status" value="1"/>
</dbReference>
<dbReference type="Pfam" id="PF03120">
    <property type="entry name" value="DNA_ligase_OB"/>
    <property type="match status" value="1"/>
</dbReference>
<dbReference type="Pfam" id="PF03119">
    <property type="entry name" value="DNA_ligase_ZBD"/>
    <property type="match status" value="1"/>
</dbReference>
<dbReference type="Pfam" id="PF12826">
    <property type="entry name" value="HHH_2"/>
    <property type="match status" value="1"/>
</dbReference>
<dbReference type="Pfam" id="PF14520">
    <property type="entry name" value="HHH_5"/>
    <property type="match status" value="1"/>
</dbReference>
<dbReference type="Pfam" id="PF22745">
    <property type="entry name" value="Nlig-Ia"/>
    <property type="match status" value="1"/>
</dbReference>
<dbReference type="PIRSF" id="PIRSF001604">
    <property type="entry name" value="LigA"/>
    <property type="match status" value="1"/>
</dbReference>
<dbReference type="SMART" id="SM00292">
    <property type="entry name" value="BRCT"/>
    <property type="match status" value="1"/>
</dbReference>
<dbReference type="SMART" id="SM00278">
    <property type="entry name" value="HhH1"/>
    <property type="match status" value="3"/>
</dbReference>
<dbReference type="SMART" id="SM00532">
    <property type="entry name" value="LIGANc"/>
    <property type="match status" value="1"/>
</dbReference>
<dbReference type="SUPFAM" id="SSF52113">
    <property type="entry name" value="BRCT domain"/>
    <property type="match status" value="1"/>
</dbReference>
<dbReference type="SUPFAM" id="SSF56091">
    <property type="entry name" value="DNA ligase/mRNA capping enzyme, catalytic domain"/>
    <property type="match status" value="1"/>
</dbReference>
<dbReference type="SUPFAM" id="SSF50249">
    <property type="entry name" value="Nucleic acid-binding proteins"/>
    <property type="match status" value="1"/>
</dbReference>
<dbReference type="SUPFAM" id="SSF47781">
    <property type="entry name" value="RuvA domain 2-like"/>
    <property type="match status" value="1"/>
</dbReference>
<dbReference type="PROSITE" id="PS50172">
    <property type="entry name" value="BRCT"/>
    <property type="match status" value="1"/>
</dbReference>
<dbReference type="PROSITE" id="PS01055">
    <property type="entry name" value="DNA_LIGASE_N1"/>
    <property type="match status" value="1"/>
</dbReference>
<dbReference type="PROSITE" id="PS01056">
    <property type="entry name" value="DNA_LIGASE_N2"/>
    <property type="match status" value="1"/>
</dbReference>
<evidence type="ECO:0000255" key="1">
    <source>
        <dbReference type="HAMAP-Rule" id="MF_01588"/>
    </source>
</evidence>
<organism>
    <name type="scientific">Thermoanaerobacter sp. (strain X514)</name>
    <dbReference type="NCBI Taxonomy" id="399726"/>
    <lineage>
        <taxon>Bacteria</taxon>
        <taxon>Bacillati</taxon>
        <taxon>Bacillota</taxon>
        <taxon>Clostridia</taxon>
        <taxon>Thermoanaerobacterales</taxon>
        <taxon>Thermoanaerobacteraceae</taxon>
        <taxon>Thermoanaerobacter</taxon>
    </lineage>
</organism>
<keyword id="KW-0227">DNA damage</keyword>
<keyword id="KW-0234">DNA repair</keyword>
<keyword id="KW-0235">DNA replication</keyword>
<keyword id="KW-0436">Ligase</keyword>
<keyword id="KW-0460">Magnesium</keyword>
<keyword id="KW-0464">Manganese</keyword>
<keyword id="KW-0479">Metal-binding</keyword>
<keyword id="KW-0520">NAD</keyword>
<keyword id="KW-0862">Zinc</keyword>
<name>DNLJ_THEPX</name>
<protein>
    <recommendedName>
        <fullName evidence="1">DNA ligase</fullName>
        <ecNumber evidence="1">6.5.1.2</ecNumber>
    </recommendedName>
    <alternativeName>
        <fullName evidence="1">Polydeoxyribonucleotide synthase [NAD(+)]</fullName>
    </alternativeName>
</protein>
<accession>B0K3S1</accession>
<sequence length="662" mass="74986">MDPKERIKELREKINYHNYRYYVLDQPEISDYEYDMLMRELIELEEKYPELKTPDSPSQRVGGEPLKEFEPFTHVVPMLSLANAFSEGELRDFDRRVREAVGDVEYVVELKIDGLSVELIYEKGIFTVGSTRGDGIVGENVTQNLKTIKSIPLRLKDDVSLVVRGEVFMPRASFEKLNEEREKLGESLFANPRNAAAGSLRQLDPKVTAKRDLDIFIFNLQKIEGRKFKTHIETLEFLNEQGFKIIPIHKKCSNIDEVIKEIEEIRNLRDKLPYDIDGAVVKVNDLEKREILGQTAKDPRWAIAFKYPAERKKTKVLDIIVQVGRTGALTPTAILEPVAISGSVVSRATLHNEDYIKEKDIRIGDTVIVQKAGEIIPEVVEVVKEERTGQEREFVMPDRCPECGALAVRLLGEAIRRCTGLNCPAQLLRGIIHFASKDAMDIEGLGPAIINQLLSKGLIHNIADLYYLKYEDLIQLERMGDKSVKNLLNAIEESKTRDLDRLLFGLGINLIGSKAAQVIAEHFKTMDNIMKAKFEDFTQLPDIGPKMARSIVSFFAEKQNVEIIEKLKNAGVNMKKLSKGKVSNIFEGKTFVLTGALESYTREEATRMIEERGGKVTNSVSKKTDYVLVGKDPGSKLKKAQELGIKIIDEKQFEEMLKGENI</sequence>